<name>COBS_SHIB3</name>
<dbReference type="EC" id="2.7.8.26" evidence="1"/>
<dbReference type="EMBL" id="CP001063">
    <property type="protein sequence ID" value="ACD08794.1"/>
    <property type="molecule type" value="Genomic_DNA"/>
</dbReference>
<dbReference type="RefSeq" id="WP_001297350.1">
    <property type="nucleotide sequence ID" value="NC_010658.1"/>
</dbReference>
<dbReference type="STRING" id="344609.SbBS512_E0966"/>
<dbReference type="GeneID" id="93775192"/>
<dbReference type="KEGG" id="sbc:SbBS512_E0966"/>
<dbReference type="HOGENOM" id="CLU_057426_1_1_6"/>
<dbReference type="UniPathway" id="UPA00148">
    <property type="reaction ID" value="UER00238"/>
</dbReference>
<dbReference type="Proteomes" id="UP000001030">
    <property type="component" value="Chromosome"/>
</dbReference>
<dbReference type="GO" id="GO:0005886">
    <property type="term" value="C:plasma membrane"/>
    <property type="evidence" value="ECO:0007669"/>
    <property type="project" value="UniProtKB-SubCell"/>
</dbReference>
<dbReference type="GO" id="GO:0051073">
    <property type="term" value="F:adenosylcobinamide-GDP ribazoletransferase activity"/>
    <property type="evidence" value="ECO:0007669"/>
    <property type="project" value="UniProtKB-UniRule"/>
</dbReference>
<dbReference type="GO" id="GO:0008818">
    <property type="term" value="F:cobalamin 5'-phosphate synthase activity"/>
    <property type="evidence" value="ECO:0007669"/>
    <property type="project" value="UniProtKB-UniRule"/>
</dbReference>
<dbReference type="GO" id="GO:0009236">
    <property type="term" value="P:cobalamin biosynthetic process"/>
    <property type="evidence" value="ECO:0007669"/>
    <property type="project" value="UniProtKB-UniRule"/>
</dbReference>
<dbReference type="HAMAP" id="MF_00719">
    <property type="entry name" value="CobS"/>
    <property type="match status" value="1"/>
</dbReference>
<dbReference type="InterPro" id="IPR003805">
    <property type="entry name" value="CobS"/>
</dbReference>
<dbReference type="NCBIfam" id="TIGR00317">
    <property type="entry name" value="cobS"/>
    <property type="match status" value="1"/>
</dbReference>
<dbReference type="PANTHER" id="PTHR34148">
    <property type="entry name" value="ADENOSYLCOBINAMIDE-GDP RIBAZOLETRANSFERASE"/>
    <property type="match status" value="1"/>
</dbReference>
<dbReference type="PANTHER" id="PTHR34148:SF1">
    <property type="entry name" value="ADENOSYLCOBINAMIDE-GDP RIBAZOLETRANSFERASE"/>
    <property type="match status" value="1"/>
</dbReference>
<dbReference type="Pfam" id="PF02654">
    <property type="entry name" value="CobS"/>
    <property type="match status" value="1"/>
</dbReference>
<evidence type="ECO:0000255" key="1">
    <source>
        <dbReference type="HAMAP-Rule" id="MF_00719"/>
    </source>
</evidence>
<comment type="function">
    <text evidence="1">Joins adenosylcobinamide-GDP and alpha-ribazole to generate adenosylcobalamin (Ado-cobalamin). Also synthesizes adenosylcobalamin 5'-phosphate from adenosylcobinamide-GDP and alpha-ribazole 5'-phosphate.</text>
</comment>
<comment type="catalytic activity">
    <reaction evidence="1">
        <text>alpha-ribazole + adenosylcob(III)inamide-GDP = adenosylcob(III)alamin + GMP + H(+)</text>
        <dbReference type="Rhea" id="RHEA:16049"/>
        <dbReference type="ChEBI" id="CHEBI:10329"/>
        <dbReference type="ChEBI" id="CHEBI:15378"/>
        <dbReference type="ChEBI" id="CHEBI:18408"/>
        <dbReference type="ChEBI" id="CHEBI:58115"/>
        <dbReference type="ChEBI" id="CHEBI:60487"/>
        <dbReference type="EC" id="2.7.8.26"/>
    </reaction>
</comment>
<comment type="catalytic activity">
    <reaction evidence="1">
        <text>alpha-ribazole 5'-phosphate + adenosylcob(III)inamide-GDP = adenosylcob(III)alamin 5'-phosphate + GMP + H(+)</text>
        <dbReference type="Rhea" id="RHEA:23560"/>
        <dbReference type="ChEBI" id="CHEBI:15378"/>
        <dbReference type="ChEBI" id="CHEBI:57918"/>
        <dbReference type="ChEBI" id="CHEBI:58115"/>
        <dbReference type="ChEBI" id="CHEBI:60487"/>
        <dbReference type="ChEBI" id="CHEBI:60493"/>
        <dbReference type="EC" id="2.7.8.26"/>
    </reaction>
</comment>
<comment type="cofactor">
    <cofactor evidence="1">
        <name>Mg(2+)</name>
        <dbReference type="ChEBI" id="CHEBI:18420"/>
    </cofactor>
</comment>
<comment type="pathway">
    <text evidence="1">Cofactor biosynthesis; adenosylcobalamin biosynthesis; adenosylcobalamin from cob(II)yrinate a,c-diamide: step 7/7.</text>
</comment>
<comment type="subcellular location">
    <subcellularLocation>
        <location evidence="1">Cell inner membrane</location>
        <topology evidence="1">Multi-pass membrane protein</topology>
    </subcellularLocation>
</comment>
<comment type="similarity">
    <text evidence="1">Belongs to the CobS family.</text>
</comment>
<protein>
    <recommendedName>
        <fullName evidence="1">Adenosylcobinamide-GDP ribazoletransferase</fullName>
        <ecNumber evidence="1">2.7.8.26</ecNumber>
    </recommendedName>
    <alternativeName>
        <fullName evidence="1">Cobalamin synthase</fullName>
    </alternativeName>
    <alternativeName>
        <fullName evidence="1">Cobalamin-5'-phosphate synthase</fullName>
    </alternativeName>
</protein>
<reference key="1">
    <citation type="submission" date="2008-05" db="EMBL/GenBank/DDBJ databases">
        <title>Complete sequence of Shigella boydii serotype 18 strain BS512.</title>
        <authorList>
            <person name="Rasko D.A."/>
            <person name="Rosovitz M."/>
            <person name="Maurelli A.T."/>
            <person name="Myers G."/>
            <person name="Seshadri R."/>
            <person name="Cer R."/>
            <person name="Jiang L."/>
            <person name="Ravel J."/>
            <person name="Sebastian Y."/>
        </authorList>
    </citation>
    <scope>NUCLEOTIDE SEQUENCE [LARGE SCALE GENOMIC DNA]</scope>
    <source>
        <strain>CDC 3083-94 / BS512</strain>
    </source>
</reference>
<sequence length="247" mass="26396">MSKLFWAMLSFITRLPVPRRWSQGLDFEHYSRGIITFPLIGLLLGAISGLVFMVLQAWCGVPLAALFSVLVLALMTGGFHLDGLADTCDGVFSARSRDRMLEIMRDSRLGTHGGLALIFVVLAKILVLSELALRGEPILASLAAACAVSRGTAALLMYRHRYAREEGLGNVFIGKIDGRQTCVTLGLAAIFAAVLLPGMHGVAAMVVTMVAIFILGQLLKRTLGGQTGDTLGAAIELGELVFLLALL</sequence>
<organism>
    <name type="scientific">Shigella boydii serotype 18 (strain CDC 3083-94 / BS512)</name>
    <dbReference type="NCBI Taxonomy" id="344609"/>
    <lineage>
        <taxon>Bacteria</taxon>
        <taxon>Pseudomonadati</taxon>
        <taxon>Pseudomonadota</taxon>
        <taxon>Gammaproteobacteria</taxon>
        <taxon>Enterobacterales</taxon>
        <taxon>Enterobacteriaceae</taxon>
        <taxon>Shigella</taxon>
    </lineage>
</organism>
<gene>
    <name evidence="1" type="primary">cobS</name>
    <name type="ordered locus">SbBS512_E0966</name>
</gene>
<feature type="chain" id="PRO_1000189620" description="Adenosylcobinamide-GDP ribazoletransferase">
    <location>
        <begin position="1"/>
        <end position="247"/>
    </location>
</feature>
<feature type="transmembrane region" description="Helical" evidence="1">
    <location>
        <begin position="34"/>
        <end position="54"/>
    </location>
</feature>
<feature type="transmembrane region" description="Helical" evidence="1">
    <location>
        <begin position="59"/>
        <end position="79"/>
    </location>
</feature>
<feature type="transmembrane region" description="Helical" evidence="1">
    <location>
        <begin position="113"/>
        <end position="133"/>
    </location>
</feature>
<feature type="transmembrane region" description="Helical" evidence="1">
    <location>
        <begin position="138"/>
        <end position="158"/>
    </location>
</feature>
<feature type="transmembrane region" description="Helical" evidence="1">
    <location>
        <begin position="194"/>
        <end position="214"/>
    </location>
</feature>
<keyword id="KW-0997">Cell inner membrane</keyword>
<keyword id="KW-1003">Cell membrane</keyword>
<keyword id="KW-0169">Cobalamin biosynthesis</keyword>
<keyword id="KW-0460">Magnesium</keyword>
<keyword id="KW-0472">Membrane</keyword>
<keyword id="KW-1185">Reference proteome</keyword>
<keyword id="KW-0808">Transferase</keyword>
<keyword id="KW-0812">Transmembrane</keyword>
<keyword id="KW-1133">Transmembrane helix</keyword>
<accession>B2TWQ9</accession>
<proteinExistence type="inferred from homology"/>